<proteinExistence type="inferred from homology"/>
<reference key="1">
    <citation type="journal article" date="2009" name="PLoS Pathog.">
        <title>Genomic evidence for the evolution of Streptococcus equi: host restriction, increased virulence, and genetic exchange with human pathogens.</title>
        <authorList>
            <person name="Holden M.T.G."/>
            <person name="Heather Z."/>
            <person name="Paillot R."/>
            <person name="Steward K.F."/>
            <person name="Webb K."/>
            <person name="Ainslie F."/>
            <person name="Jourdan T."/>
            <person name="Bason N.C."/>
            <person name="Holroyd N.E."/>
            <person name="Mungall K."/>
            <person name="Quail M.A."/>
            <person name="Sanders M."/>
            <person name="Simmonds M."/>
            <person name="Willey D."/>
            <person name="Brooks K."/>
            <person name="Aanensen D.M."/>
            <person name="Spratt B.G."/>
            <person name="Jolley K.A."/>
            <person name="Maiden M.C.J."/>
            <person name="Kehoe M."/>
            <person name="Chanter N."/>
            <person name="Bentley S.D."/>
            <person name="Robinson C."/>
            <person name="Maskell D.J."/>
            <person name="Parkhill J."/>
            <person name="Waller A.S."/>
        </authorList>
    </citation>
    <scope>NUCLEOTIDE SEQUENCE [LARGE SCALE GENOMIC DNA]</scope>
    <source>
        <strain>4047</strain>
    </source>
</reference>
<comment type="function">
    <text evidence="1">Catalyzes the attachment of tyrosine to tRNA(Tyr) in a two-step reaction: tyrosine is first activated by ATP to form Tyr-AMP and then transferred to the acceptor end of tRNA(Tyr).</text>
</comment>
<comment type="catalytic activity">
    <reaction evidence="1">
        <text>tRNA(Tyr) + L-tyrosine + ATP = L-tyrosyl-tRNA(Tyr) + AMP + diphosphate + H(+)</text>
        <dbReference type="Rhea" id="RHEA:10220"/>
        <dbReference type="Rhea" id="RHEA-COMP:9706"/>
        <dbReference type="Rhea" id="RHEA-COMP:9707"/>
        <dbReference type="ChEBI" id="CHEBI:15378"/>
        <dbReference type="ChEBI" id="CHEBI:30616"/>
        <dbReference type="ChEBI" id="CHEBI:33019"/>
        <dbReference type="ChEBI" id="CHEBI:58315"/>
        <dbReference type="ChEBI" id="CHEBI:78442"/>
        <dbReference type="ChEBI" id="CHEBI:78536"/>
        <dbReference type="ChEBI" id="CHEBI:456215"/>
        <dbReference type="EC" id="6.1.1.1"/>
    </reaction>
</comment>
<comment type="subunit">
    <text evidence="1">Homodimer.</text>
</comment>
<comment type="subcellular location">
    <subcellularLocation>
        <location evidence="1">Cytoplasm</location>
    </subcellularLocation>
</comment>
<comment type="similarity">
    <text evidence="1">Belongs to the class-I aminoacyl-tRNA synthetase family. TyrS type 1 subfamily.</text>
</comment>
<sequence>MNIFEELKARGLVFQTTDEEALVKALTEGQVSYYTGYDPTADSLHLGHLVAILTSRRLQLAGHKPYALVGGATGLIGDPSFKDAERILQTKETVLDWSQKIKEQLSCFLDFDNGENKAELVNNYDWFSQISFIDFLRDVGKHFTINYMMSKDSVKKRIETGISYTEFAYQVMQGYDFYELNAKHNVTLQIGGSDQWGNMTAGTELLRKKADKTGHVMTVPLITDATGKKFGKSEGNAIWLDAKKTSPYEMYQFWLNVMDDDAVRFLKIFTFLSLDEIAAIEEQFNAARHERLAQKTLAREVVTLVHGEAAYQQALNITEQLFAGAIKNLSAAELKQGLSNVPNYQVQAEDSLNIVDMLVTAGISPSKRQAREDLQNGAIYLNGERLQDLDYSLSTADRIDNQLTVIRRGKKKYAVLTY</sequence>
<accession>C0M6G7</accession>
<gene>
    <name evidence="1" type="primary">tyrS</name>
    <name type="ordered locus">SEQ_0096</name>
</gene>
<protein>
    <recommendedName>
        <fullName evidence="1">Tyrosine--tRNA ligase</fullName>
        <ecNumber evidence="1">6.1.1.1</ecNumber>
    </recommendedName>
    <alternativeName>
        <fullName evidence="1">Tyrosyl-tRNA synthetase</fullName>
        <shortName evidence="1">TyrRS</shortName>
    </alternativeName>
</protein>
<keyword id="KW-0030">Aminoacyl-tRNA synthetase</keyword>
<keyword id="KW-0067">ATP-binding</keyword>
<keyword id="KW-0963">Cytoplasm</keyword>
<keyword id="KW-0436">Ligase</keyword>
<keyword id="KW-0547">Nucleotide-binding</keyword>
<keyword id="KW-0648">Protein biosynthesis</keyword>
<keyword id="KW-0694">RNA-binding</keyword>
<organism>
    <name type="scientific">Streptococcus equi subsp. equi (strain 4047)</name>
    <dbReference type="NCBI Taxonomy" id="553482"/>
    <lineage>
        <taxon>Bacteria</taxon>
        <taxon>Bacillati</taxon>
        <taxon>Bacillota</taxon>
        <taxon>Bacilli</taxon>
        <taxon>Lactobacillales</taxon>
        <taxon>Streptococcaceae</taxon>
        <taxon>Streptococcus</taxon>
    </lineage>
</organism>
<name>SYY_STRE4</name>
<evidence type="ECO:0000255" key="1">
    <source>
        <dbReference type="HAMAP-Rule" id="MF_02006"/>
    </source>
</evidence>
<dbReference type="EC" id="6.1.1.1" evidence="1"/>
<dbReference type="EMBL" id="FM204883">
    <property type="protein sequence ID" value="CAW92036.1"/>
    <property type="molecule type" value="Genomic_DNA"/>
</dbReference>
<dbReference type="RefSeq" id="WP_012678803.1">
    <property type="nucleotide sequence ID" value="NC_012471.1"/>
</dbReference>
<dbReference type="SMR" id="C0M6G7"/>
<dbReference type="KEGG" id="seu:SEQ_0096"/>
<dbReference type="HOGENOM" id="CLU_024003_0_3_9"/>
<dbReference type="OrthoDB" id="9804243at2"/>
<dbReference type="Proteomes" id="UP000001365">
    <property type="component" value="Chromosome"/>
</dbReference>
<dbReference type="GO" id="GO:0005829">
    <property type="term" value="C:cytosol"/>
    <property type="evidence" value="ECO:0007669"/>
    <property type="project" value="TreeGrafter"/>
</dbReference>
<dbReference type="GO" id="GO:0005524">
    <property type="term" value="F:ATP binding"/>
    <property type="evidence" value="ECO:0007669"/>
    <property type="project" value="UniProtKB-UniRule"/>
</dbReference>
<dbReference type="GO" id="GO:0003723">
    <property type="term" value="F:RNA binding"/>
    <property type="evidence" value="ECO:0007669"/>
    <property type="project" value="UniProtKB-KW"/>
</dbReference>
<dbReference type="GO" id="GO:0004831">
    <property type="term" value="F:tyrosine-tRNA ligase activity"/>
    <property type="evidence" value="ECO:0007669"/>
    <property type="project" value="UniProtKB-UniRule"/>
</dbReference>
<dbReference type="GO" id="GO:0006437">
    <property type="term" value="P:tyrosyl-tRNA aminoacylation"/>
    <property type="evidence" value="ECO:0007669"/>
    <property type="project" value="UniProtKB-UniRule"/>
</dbReference>
<dbReference type="CDD" id="cd00165">
    <property type="entry name" value="S4"/>
    <property type="match status" value="1"/>
</dbReference>
<dbReference type="CDD" id="cd00805">
    <property type="entry name" value="TyrRS_core"/>
    <property type="match status" value="1"/>
</dbReference>
<dbReference type="FunFam" id="1.10.240.10:FF:000001">
    <property type="entry name" value="Tyrosine--tRNA ligase"/>
    <property type="match status" value="1"/>
</dbReference>
<dbReference type="FunFam" id="3.40.50.620:FF:000008">
    <property type="entry name" value="Tyrosine--tRNA ligase"/>
    <property type="match status" value="1"/>
</dbReference>
<dbReference type="Gene3D" id="3.40.50.620">
    <property type="entry name" value="HUPs"/>
    <property type="match status" value="1"/>
</dbReference>
<dbReference type="Gene3D" id="3.10.290.10">
    <property type="entry name" value="RNA-binding S4 domain"/>
    <property type="match status" value="1"/>
</dbReference>
<dbReference type="Gene3D" id="1.10.240.10">
    <property type="entry name" value="Tyrosyl-Transfer RNA Synthetase"/>
    <property type="match status" value="1"/>
</dbReference>
<dbReference type="HAMAP" id="MF_02006">
    <property type="entry name" value="Tyr_tRNA_synth_type1"/>
    <property type="match status" value="1"/>
</dbReference>
<dbReference type="InterPro" id="IPR001412">
    <property type="entry name" value="aa-tRNA-synth_I_CS"/>
</dbReference>
<dbReference type="InterPro" id="IPR002305">
    <property type="entry name" value="aa-tRNA-synth_Ic"/>
</dbReference>
<dbReference type="InterPro" id="IPR014729">
    <property type="entry name" value="Rossmann-like_a/b/a_fold"/>
</dbReference>
<dbReference type="InterPro" id="IPR036986">
    <property type="entry name" value="S4_RNA-bd_sf"/>
</dbReference>
<dbReference type="InterPro" id="IPR054608">
    <property type="entry name" value="SYY-like_C"/>
</dbReference>
<dbReference type="InterPro" id="IPR002307">
    <property type="entry name" value="Tyr-tRNA-ligase"/>
</dbReference>
<dbReference type="InterPro" id="IPR024088">
    <property type="entry name" value="Tyr-tRNA-ligase_bac-type"/>
</dbReference>
<dbReference type="InterPro" id="IPR024107">
    <property type="entry name" value="Tyr-tRNA-ligase_bac_1"/>
</dbReference>
<dbReference type="NCBIfam" id="TIGR00234">
    <property type="entry name" value="tyrS"/>
    <property type="match status" value="1"/>
</dbReference>
<dbReference type="PANTHER" id="PTHR11766:SF0">
    <property type="entry name" value="TYROSINE--TRNA LIGASE, MITOCHONDRIAL"/>
    <property type="match status" value="1"/>
</dbReference>
<dbReference type="PANTHER" id="PTHR11766">
    <property type="entry name" value="TYROSYL-TRNA SYNTHETASE"/>
    <property type="match status" value="1"/>
</dbReference>
<dbReference type="Pfam" id="PF22421">
    <property type="entry name" value="SYY_C-terminal"/>
    <property type="match status" value="1"/>
</dbReference>
<dbReference type="Pfam" id="PF00579">
    <property type="entry name" value="tRNA-synt_1b"/>
    <property type="match status" value="1"/>
</dbReference>
<dbReference type="PRINTS" id="PR01040">
    <property type="entry name" value="TRNASYNTHTYR"/>
</dbReference>
<dbReference type="SUPFAM" id="SSF55174">
    <property type="entry name" value="Alpha-L RNA-binding motif"/>
    <property type="match status" value="1"/>
</dbReference>
<dbReference type="SUPFAM" id="SSF52374">
    <property type="entry name" value="Nucleotidylyl transferase"/>
    <property type="match status" value="1"/>
</dbReference>
<dbReference type="PROSITE" id="PS00178">
    <property type="entry name" value="AA_TRNA_LIGASE_I"/>
    <property type="match status" value="1"/>
</dbReference>
<dbReference type="PROSITE" id="PS50889">
    <property type="entry name" value="S4"/>
    <property type="match status" value="1"/>
</dbReference>
<feature type="chain" id="PRO_1000189332" description="Tyrosine--tRNA ligase">
    <location>
        <begin position="1"/>
        <end position="418"/>
    </location>
</feature>
<feature type="domain" description="S4 RNA-binding" evidence="1">
    <location>
        <begin position="352"/>
        <end position="418"/>
    </location>
</feature>
<feature type="short sequence motif" description="'HIGH' region">
    <location>
        <begin position="39"/>
        <end position="48"/>
    </location>
</feature>
<feature type="short sequence motif" description="'KMSKS' region">
    <location>
        <begin position="229"/>
        <end position="233"/>
    </location>
</feature>
<feature type="binding site" evidence="1">
    <location>
        <position position="34"/>
    </location>
    <ligand>
        <name>L-tyrosine</name>
        <dbReference type="ChEBI" id="CHEBI:58315"/>
    </ligand>
</feature>
<feature type="binding site" evidence="1">
    <location>
        <position position="169"/>
    </location>
    <ligand>
        <name>L-tyrosine</name>
        <dbReference type="ChEBI" id="CHEBI:58315"/>
    </ligand>
</feature>
<feature type="binding site" evidence="1">
    <location>
        <position position="173"/>
    </location>
    <ligand>
        <name>L-tyrosine</name>
        <dbReference type="ChEBI" id="CHEBI:58315"/>
    </ligand>
</feature>
<feature type="binding site" evidence="1">
    <location>
        <position position="232"/>
    </location>
    <ligand>
        <name>ATP</name>
        <dbReference type="ChEBI" id="CHEBI:30616"/>
    </ligand>
</feature>